<accession>Q9QJ30</accession>
<comment type="function">
    <molecule>Capsid scaffolding protein</molecule>
    <text evidence="3">Acts as a scaffold protein by binding major capsid protein in the cytoplasm, inducing the nuclear localization of both proteins. Multimerizes in the nucleus such as major capsid protein forms the icosahedral T=16 capsid. Autocatalytic cleavage releases the assembly protein, and subsequently abolishes interaction with major capsid protein. Cleavages products are evicted from the capsid before or during DNA packaging.</text>
</comment>
<comment type="function">
    <molecule>Assemblin</molecule>
    <text evidence="3">Protease that plays an essential role in virion assembly within the nucleus. Catalyzes the cleavage of the assembly protein after formation of the spherical procapsid. By that cleavage, the capsid matures and gains its icosahedral shape. The cleavage sites seem to include -Ala-Ser-, -Ala-Ala-, as well as Ala-Thr bonds. Assemblin and cleavages products are evicted from the capsid before or during DNA packaging.</text>
</comment>
<comment type="function">
    <molecule>Assembly protein</molecule>
    <text evidence="3">Plays a major role in capsid assembly. Acts as a scaffold protein by binding major capsid protein. Multimerizes in the nucleus such as major capsid protein forms the icosahedral T=16 capsid. Cleaved by assemblin after capsid completion. The cleavages products are evicted from the capsid before or during DNA packaging.</text>
</comment>
<comment type="catalytic activity">
    <molecule>Assemblin</molecule>
    <reaction evidence="3">
        <text>Cleaves -Ala-|-Ser- and -Ala-|-Ala- bonds in the scaffold protein.</text>
        <dbReference type="EC" id="3.4.21.97"/>
    </reaction>
</comment>
<comment type="subunit">
    <molecule>Capsid scaffolding protein</molecule>
    <text evidence="3">Homomultimer. Interacts with major capsid protein.</text>
</comment>
<comment type="subunit">
    <molecule>Assemblin</molecule>
    <text evidence="3">Exists in a monomer-dimer equilibrium with the dimer being the active species.</text>
</comment>
<comment type="subunit">
    <molecule>Assembly protein</molecule>
    <text evidence="3">Homomultimer. Interacts with major capsid protein.</text>
</comment>
<comment type="subcellular location">
    <molecule>Capsid scaffolding protein</molecule>
    <subcellularLocation>
        <location evidence="3">Host cytoplasm</location>
    </subcellularLocation>
</comment>
<comment type="subcellular location">
    <molecule>Assemblin</molecule>
    <subcellularLocation>
        <location evidence="3">Host nucleus</location>
    </subcellularLocation>
</comment>
<comment type="subcellular location">
    <molecule>Assembly protein</molecule>
    <subcellularLocation>
        <location evidence="3">Host nucleus</location>
    </subcellularLocation>
</comment>
<comment type="alternative products">
    <event type="alternative promoter"/>
    <isoform>
        <id>Q9QJ30-1</id>
        <name>Capsid scaffolding protein</name>
        <name>pPR</name>
        <sequence type="displayed"/>
    </isoform>
    <isoform>
        <id>Q9QJ30-2</id>
        <name>pAP</name>
        <name>Assembly protein</name>
        <sequence type="described" ref="VSP_041082"/>
    </isoform>
</comment>
<comment type="domain">
    <text evidence="3">Region of interaction between pPR and pAP is called Amino conserved domain (ACD). The region of interaction with major capsid protein is called carboxyl conserved domain (CCD).</text>
</comment>
<comment type="PTM">
    <molecule>Capsid scaffolding protein</molecule>
    <text evidence="3">Capsid scaffolding protein is cleaved by assemblin after formation of the spherical procapsid. As a result, the capsid obtains its mature, icosahedral shape. Cleavages occur at two or more sites: release (R-site) and maturation (M-site).</text>
</comment>
<comment type="similarity">
    <text evidence="3">Belongs to the herpesviridae capsid scaffolding protein family.</text>
</comment>
<feature type="chain" id="PRO_0000408411" description="Capsid scaffolding protein">
    <location>
        <begin position="1"/>
        <end position="528"/>
    </location>
</feature>
<feature type="chain" id="PRO_0000408412" description="Assemblin" evidence="3">
    <location>
        <begin position="1"/>
        <end position="230"/>
    </location>
</feature>
<feature type="chain" id="PRO_0000408413" description="Assembly protein" evidence="3">
    <location>
        <begin position="231"/>
        <end position="528"/>
    </location>
</feature>
<feature type="region of interest" description="Interaction with pAP" evidence="3">
    <location>
        <begin position="270"/>
        <end position="288"/>
    </location>
</feature>
<feature type="region of interest" description="Disordered" evidence="4">
    <location>
        <begin position="394"/>
        <end position="432"/>
    </location>
</feature>
<feature type="region of interest" description="Interaction with major capsid protein" evidence="3">
    <location>
        <begin position="508"/>
        <end position="528"/>
    </location>
</feature>
<feature type="short sequence motif" description="Nuclear localization signal" evidence="1">
    <location>
        <begin position="416"/>
        <end position="422"/>
    </location>
</feature>
<feature type="active site" description="Charge relay system" evidence="3">
    <location>
        <position position="46"/>
    </location>
</feature>
<feature type="active site" description="Charge relay system" evidence="3">
    <location>
        <position position="116"/>
    </location>
</feature>
<feature type="active site" description="Charge relay system" evidence="3">
    <location>
        <position position="135"/>
    </location>
</feature>
<feature type="site" description="Cleavage; by assemblin; Release site" evidence="3">
    <location>
        <begin position="230"/>
        <end position="231"/>
    </location>
</feature>
<feature type="site" description="Cleavage; by assemblin; Maturation site" evidence="2">
    <location>
        <begin position="491"/>
        <end position="492"/>
    </location>
</feature>
<feature type="splice variant" id="VSP_041082" description="In isoform pAP." evidence="5">
    <location>
        <begin position="1"/>
        <end position="284"/>
    </location>
</feature>
<evidence type="ECO:0000250" key="1"/>
<evidence type="ECO:0000250" key="2">
    <source>
        <dbReference type="UniProtKB" id="P16753"/>
    </source>
</evidence>
<evidence type="ECO:0000255" key="3">
    <source>
        <dbReference type="HAMAP-Rule" id="MF_04008"/>
    </source>
</evidence>
<evidence type="ECO:0000256" key="4">
    <source>
        <dbReference type="SAM" id="MobiDB-lite"/>
    </source>
</evidence>
<evidence type="ECO:0000305" key="5"/>
<reference key="1">
    <citation type="journal article" date="1999" name="J. Virol.">
        <title>Human herpesvirus 6B genome sequence: coding content and comparison with human herpesvirus 6A.</title>
        <authorList>
            <person name="Dominguez G."/>
            <person name="Dambaugh T.R."/>
            <person name="Stamey F.R."/>
            <person name="Dewhurst S."/>
            <person name="Inoue N."/>
            <person name="Pellett P.E."/>
        </authorList>
    </citation>
    <scope>NUCLEOTIDE SEQUENCE [LARGE SCALE GENOMIC DNA]</scope>
</reference>
<gene>
    <name type="primary">U53</name>
</gene>
<organismHost>
    <name type="scientific">Homo sapiens</name>
    <name type="common">Human</name>
    <dbReference type="NCBI Taxonomy" id="9606"/>
</organismHost>
<sequence length="528" mass="58835">MSKVWVGGFLCVYGEEPSEECLALPRDTVQKELRSGNIPLPLNINHNEKATIGMVRGLFDLEHGLFCVAQIQSQTFMDIIRNIASKSKLIAAGSVIEPLPPDPEIECLSSSFPGLSLSSKVLQDENLDGKPFFHHVSVCGVGRRPGTIAIFGREISWILDRFSCISESEKRQVLEGVNVYSQGFDENLFSADLYDLLADSLDTSYIRKRFPKLQLDKQLCGLSKCTYIKASEPPVEIIVATGKVAGDQVQLTTEPGSELAVETCDVSVVHGNYDAVESATATTAMSNQNLPNTTPLLSSPPFSDCVFLPKDAFFSLLNVTTGQQPKVVPPVSVHPPVTEQYQMLPYSESAAKIAEQESNRYHSPCQTMYPYWQYSPVPQYPAVLHGYRQPKTFKKRHFQSDSEDELSFPGDPEYTKKRRRHKVDNDDDKEMAREKNDLRELVDMIGMLRQEINALKHVRAQSPQRHVVPMETLPTIEEKGAASPKPSILNASLTPETVNRSLAGQNESMDLLKLNKKLFVDALNKMDS</sequence>
<dbReference type="EC" id="3.4.21.97" evidence="3"/>
<dbReference type="EMBL" id="AF157706">
    <property type="protein sequence ID" value="AAD49656.1"/>
    <property type="molecule type" value="Genomic_DNA"/>
</dbReference>
<dbReference type="RefSeq" id="NP_050234.1">
    <property type="nucleotide sequence ID" value="NC_000898.1"/>
</dbReference>
<dbReference type="SMR" id="Q9QJ30"/>
<dbReference type="MEROPS" id="S21.004"/>
<dbReference type="DNASU" id="1497055"/>
<dbReference type="GeneID" id="1497055"/>
<dbReference type="KEGG" id="vg:1497055"/>
<dbReference type="Proteomes" id="UP000006930">
    <property type="component" value="Segment"/>
</dbReference>
<dbReference type="GO" id="GO:0030430">
    <property type="term" value="C:host cell cytoplasm"/>
    <property type="evidence" value="ECO:0007669"/>
    <property type="project" value="UniProtKB-SubCell"/>
</dbReference>
<dbReference type="GO" id="GO:0042025">
    <property type="term" value="C:host cell nucleus"/>
    <property type="evidence" value="ECO:0007669"/>
    <property type="project" value="UniProtKB-SubCell"/>
</dbReference>
<dbReference type="GO" id="GO:0042802">
    <property type="term" value="F:identical protein binding"/>
    <property type="evidence" value="ECO:0007669"/>
    <property type="project" value="UniProtKB-UniRule"/>
</dbReference>
<dbReference type="GO" id="GO:0004252">
    <property type="term" value="F:serine-type endopeptidase activity"/>
    <property type="evidence" value="ECO:0007669"/>
    <property type="project" value="UniProtKB-UniRule"/>
</dbReference>
<dbReference type="GO" id="GO:0039708">
    <property type="term" value="P:nuclear capsid assembly"/>
    <property type="evidence" value="ECO:0007669"/>
    <property type="project" value="UniProtKB-ARBA"/>
</dbReference>
<dbReference type="GO" id="GO:0006508">
    <property type="term" value="P:proteolysis"/>
    <property type="evidence" value="ECO:0007669"/>
    <property type="project" value="UniProtKB-KW"/>
</dbReference>
<dbReference type="GO" id="GO:0019076">
    <property type="term" value="P:viral release from host cell"/>
    <property type="evidence" value="ECO:0007669"/>
    <property type="project" value="UniProtKB-UniRule"/>
</dbReference>
<dbReference type="Gene3D" id="3.20.16.10">
    <property type="entry name" value="Herpesvirus/Caudovirus protease domain"/>
    <property type="match status" value="1"/>
</dbReference>
<dbReference type="HAMAP" id="MF_04008">
    <property type="entry name" value="HSV_SCAF"/>
    <property type="match status" value="1"/>
</dbReference>
<dbReference type="InterPro" id="IPR035443">
    <property type="entry name" value="Herpes_virus_sf"/>
</dbReference>
<dbReference type="InterPro" id="IPR001847">
    <property type="entry name" value="Peptidase_S21"/>
</dbReference>
<dbReference type="Pfam" id="PF00716">
    <property type="entry name" value="Peptidase_S21"/>
    <property type="match status" value="1"/>
</dbReference>
<dbReference type="PRINTS" id="PR00236">
    <property type="entry name" value="HSVCAPSIDP40"/>
</dbReference>
<dbReference type="SUPFAM" id="SSF50789">
    <property type="entry name" value="Herpes virus serine proteinase, assemblin"/>
    <property type="match status" value="1"/>
</dbReference>
<proteinExistence type="inferred from homology"/>
<organism>
    <name type="scientific">Human herpesvirus 6B (strain Z29)</name>
    <name type="common">HHV-6 variant B</name>
    <name type="synonym">Human B lymphotropic virus</name>
    <dbReference type="NCBI Taxonomy" id="36351"/>
    <lineage>
        <taxon>Viruses</taxon>
        <taxon>Duplodnaviria</taxon>
        <taxon>Heunggongvirae</taxon>
        <taxon>Peploviricota</taxon>
        <taxon>Herviviricetes</taxon>
        <taxon>Herpesvirales</taxon>
        <taxon>Orthoherpesviridae</taxon>
        <taxon>Betaherpesvirinae</taxon>
        <taxon>Roseolovirus</taxon>
        <taxon>Roseolovirus humanbeta6b</taxon>
        <taxon>Human herpesvirus 6B</taxon>
    </lineage>
</organism>
<name>SCAF_HHV6Z</name>
<keyword id="KW-0877">Alternative promoter usage</keyword>
<keyword id="KW-1035">Host cytoplasm</keyword>
<keyword id="KW-1048">Host nucleus</keyword>
<keyword id="KW-0378">Hydrolase</keyword>
<keyword id="KW-0597">Phosphoprotein</keyword>
<keyword id="KW-0645">Protease</keyword>
<keyword id="KW-1185">Reference proteome</keyword>
<keyword id="KW-0720">Serine protease</keyword>
<keyword id="KW-0118">Viral capsid assembly</keyword>
<keyword id="KW-1188">Viral release from host cell</keyword>
<protein>
    <recommendedName>
        <fullName evidence="3">Capsid scaffolding protein</fullName>
    </recommendedName>
    <alternativeName>
        <fullName>Capsid protein P40</fullName>
    </alternativeName>
    <alternativeName>
        <fullName evidence="3">Protease precursor</fullName>
        <shortName evidence="3">pPR</shortName>
    </alternativeName>
    <component>
        <recommendedName>
            <fullName evidence="3">Assemblin</fullName>
            <ecNumber evidence="3">3.4.21.97</ecNumber>
        </recommendedName>
        <alternativeName>
            <fullName evidence="3">Protease</fullName>
            <shortName evidence="3">Pr</shortName>
        </alternativeName>
    </component>
    <component>
        <recommendedName>
            <fullName evidence="3">Assembly protein</fullName>
            <shortName evidence="3">AP</shortName>
        </recommendedName>
        <alternativeName>
            <fullName evidence="3">Capsid assembly protein</fullName>
        </alternativeName>
    </component>
</protein>